<gene>
    <name evidence="1" type="primary">rpsK</name>
    <name evidence="1" type="synonym">rps11</name>
    <name type="ordered locus">Ava_0714</name>
</gene>
<evidence type="ECO:0000255" key="1">
    <source>
        <dbReference type="HAMAP-Rule" id="MF_01310"/>
    </source>
</evidence>
<evidence type="ECO:0000305" key="2"/>
<protein>
    <recommendedName>
        <fullName evidence="1">Small ribosomal subunit protein uS11</fullName>
    </recommendedName>
    <alternativeName>
        <fullName evidence="2">30S ribosomal protein S11</fullName>
    </alternativeName>
</protein>
<dbReference type="EMBL" id="CP000117">
    <property type="protein sequence ID" value="ABA20338.1"/>
    <property type="molecule type" value="Genomic_DNA"/>
</dbReference>
<dbReference type="RefSeq" id="WP_010998331.1">
    <property type="nucleotide sequence ID" value="NC_007413.1"/>
</dbReference>
<dbReference type="SMR" id="Q3MF98"/>
<dbReference type="STRING" id="240292.Ava_0714"/>
<dbReference type="GeneID" id="58723372"/>
<dbReference type="KEGG" id="ava:Ava_0714"/>
<dbReference type="eggNOG" id="COG0100">
    <property type="taxonomic scope" value="Bacteria"/>
</dbReference>
<dbReference type="HOGENOM" id="CLU_072439_5_0_3"/>
<dbReference type="Proteomes" id="UP000002533">
    <property type="component" value="Chromosome"/>
</dbReference>
<dbReference type="GO" id="GO:1990904">
    <property type="term" value="C:ribonucleoprotein complex"/>
    <property type="evidence" value="ECO:0007669"/>
    <property type="project" value="UniProtKB-KW"/>
</dbReference>
<dbReference type="GO" id="GO:0005840">
    <property type="term" value="C:ribosome"/>
    <property type="evidence" value="ECO:0007669"/>
    <property type="project" value="UniProtKB-KW"/>
</dbReference>
<dbReference type="GO" id="GO:0019843">
    <property type="term" value="F:rRNA binding"/>
    <property type="evidence" value="ECO:0007669"/>
    <property type="project" value="UniProtKB-UniRule"/>
</dbReference>
<dbReference type="GO" id="GO:0003735">
    <property type="term" value="F:structural constituent of ribosome"/>
    <property type="evidence" value="ECO:0007669"/>
    <property type="project" value="InterPro"/>
</dbReference>
<dbReference type="GO" id="GO:0006412">
    <property type="term" value="P:translation"/>
    <property type="evidence" value="ECO:0007669"/>
    <property type="project" value="UniProtKB-UniRule"/>
</dbReference>
<dbReference type="FunFam" id="3.30.420.80:FF:000001">
    <property type="entry name" value="30S ribosomal protein S11"/>
    <property type="match status" value="1"/>
</dbReference>
<dbReference type="Gene3D" id="3.30.420.80">
    <property type="entry name" value="Ribosomal protein S11"/>
    <property type="match status" value="1"/>
</dbReference>
<dbReference type="HAMAP" id="MF_01310">
    <property type="entry name" value="Ribosomal_uS11"/>
    <property type="match status" value="1"/>
</dbReference>
<dbReference type="InterPro" id="IPR001971">
    <property type="entry name" value="Ribosomal_uS11"/>
</dbReference>
<dbReference type="InterPro" id="IPR019981">
    <property type="entry name" value="Ribosomal_uS11_bac-type"/>
</dbReference>
<dbReference type="InterPro" id="IPR018102">
    <property type="entry name" value="Ribosomal_uS11_CS"/>
</dbReference>
<dbReference type="InterPro" id="IPR036967">
    <property type="entry name" value="Ribosomal_uS11_sf"/>
</dbReference>
<dbReference type="NCBIfam" id="NF003698">
    <property type="entry name" value="PRK05309.1"/>
    <property type="match status" value="1"/>
</dbReference>
<dbReference type="NCBIfam" id="TIGR03632">
    <property type="entry name" value="uS11_bact"/>
    <property type="match status" value="1"/>
</dbReference>
<dbReference type="PANTHER" id="PTHR11759">
    <property type="entry name" value="40S RIBOSOMAL PROTEIN S14/30S RIBOSOMAL PROTEIN S11"/>
    <property type="match status" value="1"/>
</dbReference>
<dbReference type="Pfam" id="PF00411">
    <property type="entry name" value="Ribosomal_S11"/>
    <property type="match status" value="1"/>
</dbReference>
<dbReference type="PIRSF" id="PIRSF002131">
    <property type="entry name" value="Ribosomal_S11"/>
    <property type="match status" value="1"/>
</dbReference>
<dbReference type="SUPFAM" id="SSF53137">
    <property type="entry name" value="Translational machinery components"/>
    <property type="match status" value="1"/>
</dbReference>
<dbReference type="PROSITE" id="PS00054">
    <property type="entry name" value="RIBOSOMAL_S11"/>
    <property type="match status" value="1"/>
</dbReference>
<name>RS11_TRIV2</name>
<keyword id="KW-0687">Ribonucleoprotein</keyword>
<keyword id="KW-0689">Ribosomal protein</keyword>
<keyword id="KW-0694">RNA-binding</keyword>
<keyword id="KW-0699">rRNA-binding</keyword>
<sequence>MARQPTKKSGSKKQKRNVPNGMAYIQSTFNNSIVTITDQNGDVISWASAGSSGFKGAKKGTPFAAQTAAESAARRAIDQGMRQIEVMVSGPGAGRETAIRALQGAGLEITLIRDITPIPHNGCRPPKRRRV</sequence>
<comment type="function">
    <text evidence="1">Located on the platform of the 30S subunit, it bridges several disparate RNA helices of the 16S rRNA. Forms part of the Shine-Dalgarno cleft in the 70S ribosome.</text>
</comment>
<comment type="subunit">
    <text evidence="1">Part of the 30S ribosomal subunit. Interacts with proteins S7 and S18. Binds to IF-3.</text>
</comment>
<comment type="similarity">
    <text evidence="1">Belongs to the universal ribosomal protein uS11 family.</text>
</comment>
<reference key="1">
    <citation type="journal article" date="2014" name="Stand. Genomic Sci.">
        <title>Complete genome sequence of Anabaena variabilis ATCC 29413.</title>
        <authorList>
            <person name="Thiel T."/>
            <person name="Pratte B.S."/>
            <person name="Zhong J."/>
            <person name="Goodwin L."/>
            <person name="Copeland A."/>
            <person name="Lucas S."/>
            <person name="Han C."/>
            <person name="Pitluck S."/>
            <person name="Land M.L."/>
            <person name="Kyrpides N.C."/>
            <person name="Woyke T."/>
        </authorList>
    </citation>
    <scope>NUCLEOTIDE SEQUENCE [LARGE SCALE GENOMIC DNA]</scope>
    <source>
        <strain>ATCC 29413 / PCC 7937</strain>
    </source>
</reference>
<feature type="chain" id="PRO_0000230384" description="Small ribosomal subunit protein uS11">
    <location>
        <begin position="1"/>
        <end position="131"/>
    </location>
</feature>
<proteinExistence type="inferred from homology"/>
<organism>
    <name type="scientific">Trichormus variabilis (strain ATCC 29413 / PCC 7937)</name>
    <name type="common">Anabaena variabilis</name>
    <dbReference type="NCBI Taxonomy" id="240292"/>
    <lineage>
        <taxon>Bacteria</taxon>
        <taxon>Bacillati</taxon>
        <taxon>Cyanobacteriota</taxon>
        <taxon>Cyanophyceae</taxon>
        <taxon>Nostocales</taxon>
        <taxon>Nostocaceae</taxon>
        <taxon>Trichormus</taxon>
    </lineage>
</organism>
<accession>Q3MF98</accession>